<protein>
    <recommendedName>
        <fullName>Metal transporter Nramp5</fullName>
    </recommendedName>
</protein>
<proteinExistence type="evidence at transcript level"/>
<dbReference type="EMBL" id="AP004176">
    <property type="protein sequence ID" value="BAC21413.1"/>
    <property type="molecule type" value="Genomic_DNA"/>
</dbReference>
<dbReference type="EMBL" id="AP008213">
    <property type="protein sequence ID" value="BAF21226.1"/>
    <property type="molecule type" value="Genomic_DNA"/>
</dbReference>
<dbReference type="EMBL" id="AP014963">
    <property type="protein sequence ID" value="BAT00873.1"/>
    <property type="molecule type" value="Genomic_DNA"/>
</dbReference>
<dbReference type="EMBL" id="AK070788">
    <property type="protein sequence ID" value="BAG92143.1"/>
    <property type="molecule type" value="mRNA"/>
</dbReference>
<dbReference type="RefSeq" id="XP_015645014.1">
    <property type="nucleotide sequence ID" value="XM_015789528.1"/>
</dbReference>
<dbReference type="SMR" id="Q8H4H5"/>
<dbReference type="FunCoup" id="Q8H4H5">
    <property type="interactions" value="7"/>
</dbReference>
<dbReference type="STRING" id="39947.Q8H4H5"/>
<dbReference type="TCDB" id="2.A.55.2.19">
    <property type="family name" value="the metal ion (mn(2+)-iron) transporter (nramp) family"/>
</dbReference>
<dbReference type="PaxDb" id="39947-Q8H4H5"/>
<dbReference type="EnsemblPlants" id="Os07t0257200-01">
    <property type="protein sequence ID" value="Os07t0257200-01"/>
    <property type="gene ID" value="Os07g0257200"/>
</dbReference>
<dbReference type="Gramene" id="Os07t0257200-01">
    <property type="protein sequence ID" value="Os07t0257200-01"/>
    <property type="gene ID" value="Os07g0257200"/>
</dbReference>
<dbReference type="KEGG" id="dosa:Os07g0257200"/>
<dbReference type="eggNOG" id="KOG1291">
    <property type="taxonomic scope" value="Eukaryota"/>
</dbReference>
<dbReference type="HOGENOM" id="CLU_020088_0_1_1"/>
<dbReference type="InParanoid" id="Q8H4H5"/>
<dbReference type="OMA" id="PHTIYLG"/>
<dbReference type="OrthoDB" id="409173at2759"/>
<dbReference type="Proteomes" id="UP000000763">
    <property type="component" value="Chromosome 7"/>
</dbReference>
<dbReference type="Proteomes" id="UP000059680">
    <property type="component" value="Chromosome 7"/>
</dbReference>
<dbReference type="ExpressionAtlas" id="Q8H4H5">
    <property type="expression patterns" value="baseline and differential"/>
</dbReference>
<dbReference type="GO" id="GO:0005886">
    <property type="term" value="C:plasma membrane"/>
    <property type="evidence" value="ECO:0000318"/>
    <property type="project" value="GO_Central"/>
</dbReference>
<dbReference type="GO" id="GO:0015086">
    <property type="term" value="F:cadmium ion transmembrane transporter activity"/>
    <property type="evidence" value="ECO:0000318"/>
    <property type="project" value="GO_Central"/>
</dbReference>
<dbReference type="GO" id="GO:0005384">
    <property type="term" value="F:manganese ion transmembrane transporter activity"/>
    <property type="evidence" value="ECO:0000318"/>
    <property type="project" value="GO_Central"/>
</dbReference>
<dbReference type="GO" id="GO:0034755">
    <property type="term" value="P:iron ion transmembrane transport"/>
    <property type="evidence" value="ECO:0000318"/>
    <property type="project" value="GO_Central"/>
</dbReference>
<dbReference type="GO" id="GO:0006828">
    <property type="term" value="P:manganese ion transport"/>
    <property type="evidence" value="ECO:0000318"/>
    <property type="project" value="GO_Central"/>
</dbReference>
<dbReference type="HAMAP" id="MF_00221">
    <property type="entry name" value="NRAMP"/>
    <property type="match status" value="1"/>
</dbReference>
<dbReference type="InterPro" id="IPR001046">
    <property type="entry name" value="NRAMP_fam"/>
</dbReference>
<dbReference type="NCBIfam" id="TIGR01197">
    <property type="entry name" value="nramp"/>
    <property type="match status" value="1"/>
</dbReference>
<dbReference type="NCBIfam" id="NF037982">
    <property type="entry name" value="Nramp_1"/>
    <property type="match status" value="1"/>
</dbReference>
<dbReference type="NCBIfam" id="NF001923">
    <property type="entry name" value="PRK00701.1"/>
    <property type="match status" value="1"/>
</dbReference>
<dbReference type="PANTHER" id="PTHR11706:SF77">
    <property type="entry name" value="METAL TRANSPORTER NRAMP5"/>
    <property type="match status" value="1"/>
</dbReference>
<dbReference type="PANTHER" id="PTHR11706">
    <property type="entry name" value="SOLUTE CARRIER PROTEIN FAMILY 11 MEMBER"/>
    <property type="match status" value="1"/>
</dbReference>
<dbReference type="Pfam" id="PF01566">
    <property type="entry name" value="Nramp"/>
    <property type="match status" value="1"/>
</dbReference>
<dbReference type="PRINTS" id="PR00447">
    <property type="entry name" value="NATRESASSCMP"/>
</dbReference>
<accession>Q8H4H5</accession>
<keyword id="KW-0406">Ion transport</keyword>
<keyword id="KW-0408">Iron</keyword>
<keyword id="KW-0410">Iron transport</keyword>
<keyword id="KW-0472">Membrane</keyword>
<keyword id="KW-1185">Reference proteome</keyword>
<keyword id="KW-0812">Transmembrane</keyword>
<keyword id="KW-1133">Transmembrane helix</keyword>
<keyword id="KW-0813">Transport</keyword>
<evidence type="ECO:0000250" key="1"/>
<evidence type="ECO:0000255" key="2"/>
<evidence type="ECO:0000256" key="3">
    <source>
        <dbReference type="SAM" id="MobiDB-lite"/>
    </source>
</evidence>
<evidence type="ECO:0000305" key="4"/>
<gene>
    <name type="primary">NRAMP5</name>
    <name type="ordered locus">Os07g0257200</name>
    <name type="ordered locus">LOC_Os07g15370</name>
    <name type="ORF">OJ1057_E05.110</name>
</gene>
<feature type="chain" id="PRO_0000405570" description="Metal transporter Nramp5">
    <location>
        <begin position="1"/>
        <end position="538"/>
    </location>
</feature>
<feature type="transmembrane region" description="Helical" evidence="2">
    <location>
        <begin position="44"/>
        <end position="64"/>
    </location>
</feature>
<feature type="transmembrane region" description="Helical" evidence="2">
    <location>
        <begin position="77"/>
        <end position="97"/>
    </location>
</feature>
<feature type="transmembrane region" description="Helical" evidence="2">
    <location>
        <begin position="118"/>
        <end position="138"/>
    </location>
</feature>
<feature type="transmembrane region" description="Helical" evidence="2">
    <location>
        <begin position="140"/>
        <end position="160"/>
    </location>
</feature>
<feature type="transmembrane region" description="Helical" evidence="2">
    <location>
        <begin position="181"/>
        <end position="201"/>
    </location>
</feature>
<feature type="transmembrane region" description="Helical" evidence="2">
    <location>
        <begin position="227"/>
        <end position="247"/>
    </location>
</feature>
<feature type="transmembrane region" description="Helical" evidence="2">
    <location>
        <begin position="264"/>
        <end position="284"/>
    </location>
</feature>
<feature type="transmembrane region" description="Helical" evidence="2">
    <location>
        <begin position="324"/>
        <end position="346"/>
    </location>
</feature>
<feature type="transmembrane region" description="Helical" evidence="2">
    <location>
        <begin position="365"/>
        <end position="385"/>
    </location>
</feature>
<feature type="transmembrane region" description="Helical" evidence="2">
    <location>
        <begin position="391"/>
        <end position="411"/>
    </location>
</feature>
<feature type="transmembrane region" description="Helical" evidence="2">
    <location>
        <begin position="427"/>
        <end position="447"/>
    </location>
</feature>
<feature type="transmembrane region" description="Helical" evidence="2">
    <location>
        <begin position="467"/>
        <end position="487"/>
    </location>
</feature>
<feature type="region of interest" description="Disordered" evidence="3">
    <location>
        <begin position="518"/>
        <end position="538"/>
    </location>
</feature>
<name>NRAM5_ORYSJ</name>
<sequence>MEIERESSERGSISWRASAAHDQDAKKLDADDQLLMKEPAWKRFLAHVGPGFMVSLAYLDPGNLETDLQAGANHRYELLWVILIGLIFALIIQSLAANLGVVTGRHLAEICKSEYPKFVKIFLWLLAELAVIAADIPEVIGTAFAFNILFHIPVWVGVLITGTSTLLLLGLQKYGVRKLEFLISMLVFVMAACFFGELSIVKPPAKEVMKGLFIPRLNGDGATADAIALLGALVMPHNLFLHSALVLSRKTPASVRGIKDGCRFFLYESGFALFVALLINIAVVSVSGTACSSANLSQEDADKCANLSLDTSSFLLKNVLGKSSAIVYGVALLASGQSSTITGTYAGQYIMQGFLDIRMRKWLRNLMTRTIAIAPSLIVSIIGGSRGAGRLIIIASMILSFELPFALIPLLKFSSSKSKMGPHKNSIYIIVFSWFLGLLIIGINMYFLSTSFVGWLIHNDLPKYANVLVGAAVFPFMLVYIVAVVYLTIRKDSVVTFVADSSLAAVVDAEKADAGDLAVDDDEPLPYRDDLADIPLPR</sequence>
<comment type="function">
    <text evidence="1">Probable metal transporter.</text>
</comment>
<comment type="subcellular location">
    <subcellularLocation>
        <location evidence="4">Membrane</location>
        <topology evidence="4">Multi-pass membrane protein</topology>
    </subcellularLocation>
</comment>
<comment type="similarity">
    <text evidence="4">Belongs to the NRAMP (TC 2.A.55) family.</text>
</comment>
<reference key="1">
    <citation type="journal article" date="2005" name="Nature">
        <title>The map-based sequence of the rice genome.</title>
        <authorList>
            <consortium name="International rice genome sequencing project (IRGSP)"/>
        </authorList>
    </citation>
    <scope>NUCLEOTIDE SEQUENCE [LARGE SCALE GENOMIC DNA]</scope>
    <source>
        <strain>cv. Nipponbare</strain>
    </source>
</reference>
<reference key="2">
    <citation type="journal article" date="2008" name="Nucleic Acids Res.">
        <title>The rice annotation project database (RAP-DB): 2008 update.</title>
        <authorList>
            <consortium name="The rice annotation project (RAP)"/>
        </authorList>
    </citation>
    <scope>GENOME REANNOTATION</scope>
    <source>
        <strain>cv. Nipponbare</strain>
    </source>
</reference>
<reference key="3">
    <citation type="journal article" date="2013" name="Rice">
        <title>Improvement of the Oryza sativa Nipponbare reference genome using next generation sequence and optical map data.</title>
        <authorList>
            <person name="Kawahara Y."/>
            <person name="de la Bastide M."/>
            <person name="Hamilton J.P."/>
            <person name="Kanamori H."/>
            <person name="McCombie W.R."/>
            <person name="Ouyang S."/>
            <person name="Schwartz D.C."/>
            <person name="Tanaka T."/>
            <person name="Wu J."/>
            <person name="Zhou S."/>
            <person name="Childs K.L."/>
            <person name="Davidson R.M."/>
            <person name="Lin H."/>
            <person name="Quesada-Ocampo L."/>
            <person name="Vaillancourt B."/>
            <person name="Sakai H."/>
            <person name="Lee S.S."/>
            <person name="Kim J."/>
            <person name="Numa H."/>
            <person name="Itoh T."/>
            <person name="Buell C.R."/>
            <person name="Matsumoto T."/>
        </authorList>
    </citation>
    <scope>GENOME REANNOTATION</scope>
    <source>
        <strain>cv. Nipponbare</strain>
    </source>
</reference>
<reference key="4">
    <citation type="journal article" date="2003" name="Science">
        <title>Collection, mapping, and annotation of over 28,000 cDNA clones from japonica rice.</title>
        <authorList>
            <consortium name="The rice full-length cDNA consortium"/>
        </authorList>
    </citation>
    <scope>NUCLEOTIDE SEQUENCE [LARGE SCALE MRNA]</scope>
    <source>
        <strain>cv. Nipponbare</strain>
    </source>
</reference>
<organism>
    <name type="scientific">Oryza sativa subsp. japonica</name>
    <name type="common">Rice</name>
    <dbReference type="NCBI Taxonomy" id="39947"/>
    <lineage>
        <taxon>Eukaryota</taxon>
        <taxon>Viridiplantae</taxon>
        <taxon>Streptophyta</taxon>
        <taxon>Embryophyta</taxon>
        <taxon>Tracheophyta</taxon>
        <taxon>Spermatophyta</taxon>
        <taxon>Magnoliopsida</taxon>
        <taxon>Liliopsida</taxon>
        <taxon>Poales</taxon>
        <taxon>Poaceae</taxon>
        <taxon>BOP clade</taxon>
        <taxon>Oryzoideae</taxon>
        <taxon>Oryzeae</taxon>
        <taxon>Oryzinae</taxon>
        <taxon>Oryza</taxon>
        <taxon>Oryza sativa</taxon>
    </lineage>
</organism>